<dbReference type="EC" id="2.7.13.3" evidence="1"/>
<dbReference type="EMBL" id="CP000480">
    <property type="protein sequence ID" value="ABK74063.1"/>
    <property type="molecule type" value="Genomic_DNA"/>
</dbReference>
<dbReference type="EMBL" id="CP001663">
    <property type="protein sequence ID" value="AFP37393.1"/>
    <property type="status" value="ALT_INIT"/>
    <property type="molecule type" value="Genomic_DNA"/>
</dbReference>
<dbReference type="RefSeq" id="YP_885339.1">
    <property type="nucleotide sequence ID" value="NC_008596.1"/>
</dbReference>
<dbReference type="SMR" id="A0QR01"/>
<dbReference type="STRING" id="246196.MSMEG_0936"/>
<dbReference type="PaxDb" id="246196-MSMEI_0913"/>
<dbReference type="KEGG" id="msg:MSMEI_0913"/>
<dbReference type="KEGG" id="msm:MSMEG_0936"/>
<dbReference type="PATRIC" id="fig|246196.19.peg.926"/>
<dbReference type="eggNOG" id="COG5002">
    <property type="taxonomic scope" value="Bacteria"/>
</dbReference>
<dbReference type="OrthoDB" id="9813151at2"/>
<dbReference type="Proteomes" id="UP000000757">
    <property type="component" value="Chromosome"/>
</dbReference>
<dbReference type="Proteomes" id="UP000006158">
    <property type="component" value="Chromosome"/>
</dbReference>
<dbReference type="GO" id="GO:0005886">
    <property type="term" value="C:plasma membrane"/>
    <property type="evidence" value="ECO:0007669"/>
    <property type="project" value="UniProtKB-SubCell"/>
</dbReference>
<dbReference type="GO" id="GO:0005524">
    <property type="term" value="F:ATP binding"/>
    <property type="evidence" value="ECO:0007669"/>
    <property type="project" value="UniProtKB-KW"/>
</dbReference>
<dbReference type="GO" id="GO:0004721">
    <property type="term" value="F:phosphoprotein phosphatase activity"/>
    <property type="evidence" value="ECO:0007669"/>
    <property type="project" value="TreeGrafter"/>
</dbReference>
<dbReference type="GO" id="GO:0000155">
    <property type="term" value="F:phosphorelay sensor kinase activity"/>
    <property type="evidence" value="ECO:0007669"/>
    <property type="project" value="InterPro"/>
</dbReference>
<dbReference type="GO" id="GO:0016036">
    <property type="term" value="P:cellular response to phosphate starvation"/>
    <property type="evidence" value="ECO:0007669"/>
    <property type="project" value="TreeGrafter"/>
</dbReference>
<dbReference type="CDD" id="cd00082">
    <property type="entry name" value="HisKA"/>
    <property type="match status" value="1"/>
</dbReference>
<dbReference type="FunFam" id="3.30.565.10:FF:000023">
    <property type="entry name" value="PAS domain-containing sensor histidine kinase"/>
    <property type="match status" value="1"/>
</dbReference>
<dbReference type="FunFam" id="1.10.287.130:FF:000008">
    <property type="entry name" value="Two-component sensor histidine kinase"/>
    <property type="match status" value="1"/>
</dbReference>
<dbReference type="Gene3D" id="1.10.287.130">
    <property type="match status" value="1"/>
</dbReference>
<dbReference type="Gene3D" id="3.30.565.10">
    <property type="entry name" value="Histidine kinase-like ATPase, C-terminal domain"/>
    <property type="match status" value="1"/>
</dbReference>
<dbReference type="InterPro" id="IPR050351">
    <property type="entry name" value="2-comp_sensor_kinase"/>
</dbReference>
<dbReference type="InterPro" id="IPR036890">
    <property type="entry name" value="HATPase_C_sf"/>
</dbReference>
<dbReference type="InterPro" id="IPR005467">
    <property type="entry name" value="His_kinase_dom"/>
</dbReference>
<dbReference type="InterPro" id="IPR003661">
    <property type="entry name" value="HisK_dim/P_dom"/>
</dbReference>
<dbReference type="InterPro" id="IPR036097">
    <property type="entry name" value="HisK_dim/P_sf"/>
</dbReference>
<dbReference type="InterPro" id="IPR004358">
    <property type="entry name" value="Sig_transdc_His_kin-like_C"/>
</dbReference>
<dbReference type="PANTHER" id="PTHR45453">
    <property type="entry name" value="PHOSPHATE REGULON SENSOR PROTEIN PHOR"/>
    <property type="match status" value="1"/>
</dbReference>
<dbReference type="PANTHER" id="PTHR45453:SF1">
    <property type="entry name" value="PHOSPHATE REGULON SENSOR PROTEIN PHOR"/>
    <property type="match status" value="1"/>
</dbReference>
<dbReference type="Pfam" id="PF02518">
    <property type="entry name" value="HATPase_c"/>
    <property type="match status" value="1"/>
</dbReference>
<dbReference type="Pfam" id="PF00512">
    <property type="entry name" value="HisKA"/>
    <property type="match status" value="1"/>
</dbReference>
<dbReference type="PRINTS" id="PR00344">
    <property type="entry name" value="BCTRLSENSOR"/>
</dbReference>
<dbReference type="SMART" id="SM00387">
    <property type="entry name" value="HATPase_c"/>
    <property type="match status" value="1"/>
</dbReference>
<dbReference type="SMART" id="SM00388">
    <property type="entry name" value="HisKA"/>
    <property type="match status" value="1"/>
</dbReference>
<dbReference type="SUPFAM" id="SSF55874">
    <property type="entry name" value="ATPase domain of HSP90 chaperone/DNA topoisomerase II/histidine kinase"/>
    <property type="match status" value="1"/>
</dbReference>
<dbReference type="SUPFAM" id="SSF47384">
    <property type="entry name" value="Homodimeric domain of signal transducing histidine kinase"/>
    <property type="match status" value="1"/>
</dbReference>
<dbReference type="PROSITE" id="PS50109">
    <property type="entry name" value="HIS_KIN"/>
    <property type="match status" value="1"/>
</dbReference>
<organism>
    <name type="scientific">Mycolicibacterium smegmatis (strain ATCC 700084 / mc(2)155)</name>
    <name type="common">Mycobacterium smegmatis</name>
    <dbReference type="NCBI Taxonomy" id="246196"/>
    <lineage>
        <taxon>Bacteria</taxon>
        <taxon>Bacillati</taxon>
        <taxon>Actinomycetota</taxon>
        <taxon>Actinomycetes</taxon>
        <taxon>Mycobacteriales</taxon>
        <taxon>Mycobacteriaceae</taxon>
        <taxon>Mycolicibacterium</taxon>
    </lineage>
</organism>
<protein>
    <recommendedName>
        <fullName evidence="8">Sensor-like histidine kinase SenX3</fullName>
        <ecNumber evidence="1">2.7.13.3</ecNumber>
    </recommendedName>
</protein>
<sequence length="384" mass="41862">MSLLTLIAGVAVGVTVVPRIVARRQRRAAYAAGMTVSQMLQHITSLSPMGVAVVDTFNDVVYSNDRAVELNVVRDRILDDRAWQAAQRVFETGQDVEVDLSPLKVANPGRSGISVRGKVRLLTDDDRRFAVVYIDDQSEHARMEATRRDFVANVSHELKTPVGAMSVLAEALLASADDPDTVRRFAEKMVAESHRLADMIGELIELSRLQGAERLPDLDAVDVDSIVSEAVSRHKVAADNSQISITTDAPTGYRVLGDEGLLVTAIANLVSNAIAYSPNGTDVSISRRKRGGNIEIAVTDRGIGIAKDDQERVFERFFRVDKARSRATGGTGLGLAIVKHVAANHNGSIRLWSQPGTGSTFTLSIPEYPDPESHSDEREDQRER</sequence>
<proteinExistence type="evidence at protein level"/>
<gene>
    <name evidence="7" type="primary">senX3</name>
    <name type="ordered locus">MSMEG_0936</name>
    <name type="ordered locus">MSMEI_0913</name>
</gene>
<accession>A0QR01</accession>
<accession>I7FEW3</accession>
<keyword id="KW-0067">ATP-binding</keyword>
<keyword id="KW-1003">Cell membrane</keyword>
<keyword id="KW-0418">Kinase</keyword>
<keyword id="KW-0472">Membrane</keyword>
<keyword id="KW-0547">Nucleotide-binding</keyword>
<keyword id="KW-0597">Phosphoprotein</keyword>
<keyword id="KW-1185">Reference proteome</keyword>
<keyword id="KW-0346">Stress response</keyword>
<keyword id="KW-0808">Transferase</keyword>
<keyword id="KW-0902">Two-component regulatory system</keyword>
<comment type="function">
    <text evidence="4 5 6 9">Member of the two-component regulatory system SenX3/RegX3 involved in stress response (PubMed:17526710, PubMed:18083811, PubMed:22956756). The system is involved in phosphate starvation response (PubMed:17526710). Probably exhibits a dual role as a phosphatase or a phosphodonor for the response regulator RegX3, depending upon phosphate availability (Probable). When environmental phosphate is abundant, SenX3 is required to maintain RegX3 in an unphosphorylated state, where it is unable to bind target DNA (Probable). Under conditions of phosphate limitation, SenX3 autophosphorylates and then transfers the phosphate group to RegX3 (Probable). Probably does not itself sense phosphate concentrations, which may be relayed to SenX3 by the PstSCAB phosphate transporter system (PubMed:17526710).</text>
</comment>
<comment type="catalytic activity">
    <reaction evidence="1">
        <text>ATP + protein L-histidine = ADP + protein N-phospho-L-histidine.</text>
        <dbReference type="EC" id="2.7.13.3"/>
    </reaction>
</comment>
<comment type="subcellular location">
    <subcellularLocation>
        <location evidence="8">Cell membrane</location>
        <topology evidence="8">Peripheral membrane protein</topology>
    </subcellularLocation>
</comment>
<comment type="induction">
    <text evidence="5">By phosphate-limiting growth conditions.</text>
</comment>
<comment type="PTM">
    <text evidence="1">Autophosphorylated.</text>
</comment>
<comment type="disruption phenotype">
    <text evidence="4 6">Deletion mutant does not exhibit detectable PhoA activity, even under growth conditions where Pi is the limiting nutrient (PubMed:17526710). SenX3-regX3 deletion mutant is more sensitive to phosphate limitation, showing a reduced ability to grow at lower phosphate concentrations (PubMed:22956756). The M.tuberculosis operon can functionally complement the growth phenotype in M.smegmatis under phosphate-replete conditions, but not under low phosphate conditions (PubMed:22956756).</text>
</comment>
<comment type="sequence caution" evidence="8">
    <conflict type="erroneous initiation">
        <sequence resource="EMBL-CDS" id="AFP37393"/>
    </conflict>
    <text>Extended N-terminus.</text>
</comment>
<reference key="1">
    <citation type="submission" date="2006-10" db="EMBL/GenBank/DDBJ databases">
        <authorList>
            <person name="Fleischmann R.D."/>
            <person name="Dodson R.J."/>
            <person name="Haft D.H."/>
            <person name="Merkel J.S."/>
            <person name="Nelson W.C."/>
            <person name="Fraser C.M."/>
        </authorList>
    </citation>
    <scope>NUCLEOTIDE SEQUENCE [LARGE SCALE GENOMIC DNA]</scope>
    <source>
        <strain>ATCC 700084 / mc(2)155</strain>
    </source>
</reference>
<reference key="2">
    <citation type="journal article" date="2007" name="Genome Biol.">
        <title>Interrupted coding sequences in Mycobacterium smegmatis: authentic mutations or sequencing errors?</title>
        <authorList>
            <person name="Deshayes C."/>
            <person name="Perrodou E."/>
            <person name="Gallien S."/>
            <person name="Euphrasie D."/>
            <person name="Schaeffer C."/>
            <person name="Van-Dorsselaer A."/>
            <person name="Poch O."/>
            <person name="Lecompte O."/>
            <person name="Reyrat J.-M."/>
        </authorList>
    </citation>
    <scope>NUCLEOTIDE SEQUENCE [LARGE SCALE GENOMIC DNA]</scope>
    <source>
        <strain>ATCC 700084 / mc(2)155</strain>
    </source>
</reference>
<reference key="3">
    <citation type="journal article" date="2009" name="Genome Res.">
        <title>Ortho-proteogenomics: multiple proteomes investigation through orthology and a new MS-based protocol.</title>
        <authorList>
            <person name="Gallien S."/>
            <person name="Perrodou E."/>
            <person name="Carapito C."/>
            <person name="Deshayes C."/>
            <person name="Reyrat J.-M."/>
            <person name="Van Dorsselaer A."/>
            <person name="Poch O."/>
            <person name="Schaeffer C."/>
            <person name="Lecompte O."/>
        </authorList>
    </citation>
    <scope>NUCLEOTIDE SEQUENCE [LARGE SCALE GENOMIC DNA]</scope>
    <source>
        <strain>ATCC 700084 / mc(2)155</strain>
    </source>
</reference>
<reference key="4">
    <citation type="journal article" date="2007" name="J. Bacteriol.">
        <title>The two-component regulatory system senX3-regX3 regulates phosphate-dependent gene expression in Mycobacterium smegmatis.</title>
        <authorList>
            <person name="Glover R.T."/>
            <person name="Kriakov J."/>
            <person name="Garforth S.J."/>
            <person name="Baughn A.D."/>
            <person name="Jacobs W.R. Jr."/>
        </authorList>
    </citation>
    <scope>FUNCTION IN REGULATION OF PHOSPHATE-DEPENDENT GENE EXPRESSION</scope>
    <scope>DISRUPTION PHENOTYPE</scope>
    <source>
        <strain>ATCC 700084 / mc(2)155</strain>
    </source>
</reference>
<reference key="5">
    <citation type="journal article" date="2008" name="J. Bacteriol.">
        <title>Differential regulation of high-affinity phosphate transport systems of Mycobacterium smegmatis: identification of PhnF, a repressor of the phnDCE operon.</title>
        <authorList>
            <person name="Gebhard S."/>
            <person name="Cook G.M."/>
        </authorList>
    </citation>
    <scope>FUNCTION</scope>
    <scope>INDUCTION</scope>
    <source>
        <strain>ATCC 700084 / mc(2)155</strain>
    </source>
</reference>
<reference key="6">
    <citation type="journal article" date="2012" name="Microbiology">
        <title>Deletion of SenX3-RegX3, a key two-component regulatory system of Mycobacterium smegmatis, results in growth defects under phosphate-limiting conditions.</title>
        <authorList>
            <person name="James J.N."/>
            <person name="Hasan Z.U."/>
            <person name="Ioerger T.R."/>
            <person name="Brown A.C."/>
            <person name="Personne Y."/>
            <person name="Carroll P."/>
            <person name="Ikeh M."/>
            <person name="Tilston-Lunel N.L."/>
            <person name="Palavecino C."/>
            <person name="Sacchettini J.C."/>
            <person name="Parish T."/>
        </authorList>
    </citation>
    <scope>FUNCTION</scope>
    <scope>DISRUPTION PHENOTYPE</scope>
    <source>
        <strain>ATCC 700084 / mc(2)155</strain>
    </source>
</reference>
<feature type="chain" id="PRO_0000357472" description="Sensor-like histidine kinase SenX3">
    <location>
        <begin position="1"/>
        <end position="384"/>
    </location>
</feature>
<feature type="domain" description="Histidine kinase" evidence="2">
    <location>
        <begin position="153"/>
        <end position="369"/>
    </location>
</feature>
<feature type="region of interest" description="Disordered" evidence="3">
    <location>
        <begin position="360"/>
        <end position="384"/>
    </location>
</feature>
<feature type="compositionally biased region" description="Basic and acidic residues" evidence="3">
    <location>
        <begin position="371"/>
        <end position="384"/>
    </location>
</feature>
<feature type="modified residue" description="Phosphohistidine; by autocatalysis" evidence="2">
    <location>
        <position position="156"/>
    </location>
</feature>
<evidence type="ECO:0000250" key="1">
    <source>
        <dbReference type="UniProtKB" id="P0A601"/>
    </source>
</evidence>
<evidence type="ECO:0000255" key="2">
    <source>
        <dbReference type="PROSITE-ProRule" id="PRU00107"/>
    </source>
</evidence>
<evidence type="ECO:0000256" key="3">
    <source>
        <dbReference type="SAM" id="MobiDB-lite"/>
    </source>
</evidence>
<evidence type="ECO:0000269" key="4">
    <source>
    </source>
</evidence>
<evidence type="ECO:0000269" key="5">
    <source>
    </source>
</evidence>
<evidence type="ECO:0000269" key="6">
    <source>
    </source>
</evidence>
<evidence type="ECO:0000303" key="7">
    <source>
    </source>
</evidence>
<evidence type="ECO:0000305" key="8"/>
<evidence type="ECO:0000305" key="9">
    <source>
    </source>
</evidence>
<name>SENX3_MYCS2</name>